<name>PUMP3_ARATH</name>
<comment type="function">
    <text evidence="1">PUMPS are mitochondrial transporter proteins that create proton leaks across the inner mitochondrial membrane, thus uncoupling oxidative phosphorylation. This leads to a decrease in the efficiency of oxidative phosphorylation and an increase in heat production. May be involved in protecting plant cells against oxidative stress damage (By similarity).</text>
</comment>
<comment type="subcellular location">
    <subcellularLocation>
        <location evidence="1">Mitochondrion inner membrane</location>
        <topology evidence="1">Multi-pass membrane protein</topology>
    </subcellularLocation>
</comment>
<comment type="induction">
    <text evidence="3">By high light.</text>
</comment>
<comment type="similarity">
    <text evidence="4">Belongs to the mitochondrial carrier (TC 2.A.29) family.</text>
</comment>
<accession>Q9XI74</accession>
<sequence length="305" mass="33441">MERSRVTREAPTGTRILLASLSAMVAESVTFPIDLTKTRMQLHGSGSASGAHRIGAFGVVSEIARKEGVIGLYKGLSPAIIRHLFYTPIRIIGYENLKGLIVRSETNNSESLPLATKALVGGFSGVIAQVVASPADLVKVRMQADGRLVSQGLKPRYSGPIEAFTKILQSEGVKGLWKGVLPNIQRAFLVNMGELACYDHAKHFVIDKKIAEDNIFAHTLASIMSGLASTSLSCPADVVKTRMMNQGENAVYRNSYDCLVKTVKFEGIRALWKGFFPTWARLGPWQFVFWVSYEKFRLLAGISSF</sequence>
<reference key="1">
    <citation type="journal article" date="2000" name="Nature">
        <title>Sequence and analysis of chromosome 1 of the plant Arabidopsis thaliana.</title>
        <authorList>
            <person name="Theologis A."/>
            <person name="Ecker J.R."/>
            <person name="Palm C.J."/>
            <person name="Federspiel N.A."/>
            <person name="Kaul S."/>
            <person name="White O."/>
            <person name="Alonso J."/>
            <person name="Altafi H."/>
            <person name="Araujo R."/>
            <person name="Bowman C.L."/>
            <person name="Brooks S.Y."/>
            <person name="Buehler E."/>
            <person name="Chan A."/>
            <person name="Chao Q."/>
            <person name="Chen H."/>
            <person name="Cheuk R.F."/>
            <person name="Chin C.W."/>
            <person name="Chung M.K."/>
            <person name="Conn L."/>
            <person name="Conway A.B."/>
            <person name="Conway A.R."/>
            <person name="Creasy T.H."/>
            <person name="Dewar K."/>
            <person name="Dunn P."/>
            <person name="Etgu P."/>
            <person name="Feldblyum T.V."/>
            <person name="Feng J.-D."/>
            <person name="Fong B."/>
            <person name="Fujii C.Y."/>
            <person name="Gill J.E."/>
            <person name="Goldsmith A.D."/>
            <person name="Haas B."/>
            <person name="Hansen N.F."/>
            <person name="Hughes B."/>
            <person name="Huizar L."/>
            <person name="Hunter J.L."/>
            <person name="Jenkins J."/>
            <person name="Johnson-Hopson C."/>
            <person name="Khan S."/>
            <person name="Khaykin E."/>
            <person name="Kim C.J."/>
            <person name="Koo H.L."/>
            <person name="Kremenetskaia I."/>
            <person name="Kurtz D.B."/>
            <person name="Kwan A."/>
            <person name="Lam B."/>
            <person name="Langin-Hooper S."/>
            <person name="Lee A."/>
            <person name="Lee J.M."/>
            <person name="Lenz C.A."/>
            <person name="Li J.H."/>
            <person name="Li Y.-P."/>
            <person name="Lin X."/>
            <person name="Liu S.X."/>
            <person name="Liu Z.A."/>
            <person name="Luros J.S."/>
            <person name="Maiti R."/>
            <person name="Marziali A."/>
            <person name="Militscher J."/>
            <person name="Miranda M."/>
            <person name="Nguyen M."/>
            <person name="Nierman W.C."/>
            <person name="Osborne B.I."/>
            <person name="Pai G."/>
            <person name="Peterson J."/>
            <person name="Pham P.K."/>
            <person name="Rizzo M."/>
            <person name="Rooney T."/>
            <person name="Rowley D."/>
            <person name="Sakano H."/>
            <person name="Salzberg S.L."/>
            <person name="Schwartz J.R."/>
            <person name="Shinn P."/>
            <person name="Southwick A.M."/>
            <person name="Sun H."/>
            <person name="Tallon L.J."/>
            <person name="Tambunga G."/>
            <person name="Toriumi M.J."/>
            <person name="Town C.D."/>
            <person name="Utterback T."/>
            <person name="Van Aken S."/>
            <person name="Vaysberg M."/>
            <person name="Vysotskaia V.S."/>
            <person name="Walker M."/>
            <person name="Wu D."/>
            <person name="Yu G."/>
            <person name="Fraser C.M."/>
            <person name="Venter J.C."/>
            <person name="Davis R.W."/>
        </authorList>
    </citation>
    <scope>NUCLEOTIDE SEQUENCE [LARGE SCALE GENOMIC DNA]</scope>
    <source>
        <strain>cv. Columbia</strain>
    </source>
</reference>
<reference key="2">
    <citation type="journal article" date="2017" name="Plant J.">
        <title>Araport11: a complete reannotation of the Arabidopsis thaliana reference genome.</title>
        <authorList>
            <person name="Cheng C.Y."/>
            <person name="Krishnakumar V."/>
            <person name="Chan A.P."/>
            <person name="Thibaud-Nissen F."/>
            <person name="Schobel S."/>
            <person name="Town C.D."/>
        </authorList>
    </citation>
    <scope>GENOME REANNOTATION</scope>
    <source>
        <strain>cv. Columbia</strain>
    </source>
</reference>
<reference key="3">
    <citation type="submission" date="2006-07" db="EMBL/GenBank/DDBJ databases">
        <title>Arabidopsis ORF clones.</title>
        <authorList>
            <person name="Kim C.J."/>
            <person name="Chen H."/>
            <person name="Quinitio C."/>
            <person name="Shinn P."/>
            <person name="Ecker J.R."/>
        </authorList>
    </citation>
    <scope>NUCLEOTIDE SEQUENCE [LARGE SCALE MRNA]</scope>
    <source>
        <strain>cv. Columbia</strain>
    </source>
</reference>
<reference key="4">
    <citation type="submission" date="2002-03" db="EMBL/GenBank/DDBJ databases">
        <title>Full-length cDNA from Arabidopsis thaliana.</title>
        <authorList>
            <person name="Brover V.V."/>
            <person name="Troukhan M.E."/>
            <person name="Alexandrov N.A."/>
            <person name="Lu Y.-P."/>
            <person name="Flavell R.B."/>
            <person name="Feldmann K.A."/>
        </authorList>
    </citation>
    <scope>NUCLEOTIDE SEQUENCE [LARGE SCALE MRNA]</scope>
</reference>
<reference key="5">
    <citation type="journal article" date="2006" name="J. Exp. Bot.">
        <title>The plant energy-dissipating mitochondrial systems: depicting the genomic structure and the expression profiles of the gene families of uncoupling protein and alternative oxidase in monocots and dicots.</title>
        <authorList>
            <person name="Borecky J."/>
            <person name="Nogueira F.T."/>
            <person name="de Oliveira K.A."/>
            <person name="Maia I.G."/>
            <person name="Vercesi A.E."/>
            <person name="Arruda P."/>
        </authorList>
    </citation>
    <scope>GENE FAMILY</scope>
    <scope>NOMENCLATURE</scope>
</reference>
<reference key="6">
    <citation type="journal article" date="2009" name="Plant Cell Physiol.">
        <title>Differential gene expression profiles of the mitochondrial respiratory components in illuminated Arabidopsis leaves.</title>
        <authorList>
            <person name="Yoshida K."/>
            <person name="Noguchi K."/>
        </authorList>
    </citation>
    <scope>INDUCTION BY HIGH LIGHT</scope>
</reference>
<gene>
    <name type="primary">PUMP3</name>
    <name type="synonym">UCP3</name>
    <name type="ordered locus">At1g14140</name>
    <name type="ORF">F7A19.22</name>
</gene>
<keyword id="KW-0472">Membrane</keyword>
<keyword id="KW-0496">Mitochondrion</keyword>
<keyword id="KW-0999">Mitochondrion inner membrane</keyword>
<keyword id="KW-1185">Reference proteome</keyword>
<keyword id="KW-0677">Repeat</keyword>
<keyword id="KW-0346">Stress response</keyword>
<keyword id="KW-0812">Transmembrane</keyword>
<keyword id="KW-1133">Transmembrane helix</keyword>
<keyword id="KW-0813">Transport</keyword>
<feature type="chain" id="PRO_0000420257" description="Mitochondrial uncoupling protein 3">
    <location>
        <begin position="1"/>
        <end position="305"/>
    </location>
</feature>
<feature type="transmembrane region" description="Helical; Name=1" evidence="2">
    <location>
        <begin position="16"/>
        <end position="36"/>
    </location>
</feature>
<feature type="transmembrane region" description="Helical; Name=2" evidence="2">
    <location>
        <begin position="69"/>
        <end position="89"/>
    </location>
</feature>
<feature type="transmembrane region" description="Helical; Name=3" evidence="2">
    <location>
        <begin position="118"/>
        <end position="138"/>
    </location>
</feature>
<feature type="transmembrane region" description="Helical; Name=4" evidence="2">
    <location>
        <begin position="178"/>
        <end position="198"/>
    </location>
</feature>
<feature type="transmembrane region" description="Helical; Name=5" evidence="2">
    <location>
        <begin position="219"/>
        <end position="239"/>
    </location>
</feature>
<feature type="transmembrane region" description="Helical; Name=6" evidence="2">
    <location>
        <begin position="272"/>
        <end position="292"/>
    </location>
</feature>
<feature type="repeat" description="Solcar 1">
    <location>
        <begin position="14"/>
        <end position="100"/>
    </location>
</feature>
<feature type="repeat" description="Solcar 2">
    <location>
        <begin position="112"/>
        <end position="204"/>
    </location>
</feature>
<feature type="repeat" description="Solcar 3">
    <location>
        <begin position="213"/>
        <end position="299"/>
    </location>
</feature>
<proteinExistence type="evidence at transcript level"/>
<protein>
    <recommendedName>
        <fullName>Mitochondrial uncoupling protein 3</fullName>
        <shortName>AtPUMP3</shortName>
    </recommendedName>
</protein>
<dbReference type="EMBL" id="AC007576">
    <property type="protein sequence ID" value="AAD39300.1"/>
    <property type="molecule type" value="Genomic_DNA"/>
</dbReference>
<dbReference type="EMBL" id="CP002684">
    <property type="protein sequence ID" value="AEE29110.1"/>
    <property type="molecule type" value="Genomic_DNA"/>
</dbReference>
<dbReference type="EMBL" id="BT026111">
    <property type="protein sequence ID" value="ABG48467.1"/>
    <property type="molecule type" value="mRNA"/>
</dbReference>
<dbReference type="EMBL" id="AY084432">
    <property type="protein sequence ID" value="AAM61005.1"/>
    <property type="molecule type" value="mRNA"/>
</dbReference>
<dbReference type="PIR" id="H86274">
    <property type="entry name" value="H86274"/>
</dbReference>
<dbReference type="RefSeq" id="NP_172866.1">
    <property type="nucleotide sequence ID" value="NM_101279.2"/>
</dbReference>
<dbReference type="SMR" id="Q9XI74"/>
<dbReference type="FunCoup" id="Q9XI74">
    <property type="interactions" value="2060"/>
</dbReference>
<dbReference type="STRING" id="3702.Q9XI74"/>
<dbReference type="PaxDb" id="3702-AT1G14140.1"/>
<dbReference type="ProteomicsDB" id="226360"/>
<dbReference type="EnsemblPlants" id="AT1G14140.1">
    <property type="protein sequence ID" value="AT1G14140.1"/>
    <property type="gene ID" value="AT1G14140"/>
</dbReference>
<dbReference type="GeneID" id="837973"/>
<dbReference type="Gramene" id="AT1G14140.1">
    <property type="protein sequence ID" value="AT1G14140.1"/>
    <property type="gene ID" value="AT1G14140"/>
</dbReference>
<dbReference type="KEGG" id="ath:AT1G14140"/>
<dbReference type="Araport" id="AT1G14140"/>
<dbReference type="TAIR" id="AT1G14140">
    <property type="gene designation" value="UCP3"/>
</dbReference>
<dbReference type="eggNOG" id="KOG0753">
    <property type="taxonomic scope" value="Eukaryota"/>
</dbReference>
<dbReference type="HOGENOM" id="CLU_015166_14_2_1"/>
<dbReference type="InParanoid" id="Q9XI74"/>
<dbReference type="OMA" id="FPFWKAV"/>
<dbReference type="PhylomeDB" id="Q9XI74"/>
<dbReference type="PRO" id="PR:Q9XI74"/>
<dbReference type="Proteomes" id="UP000006548">
    <property type="component" value="Chromosome 1"/>
</dbReference>
<dbReference type="ExpressionAtlas" id="Q9XI74">
    <property type="expression patterns" value="baseline and differential"/>
</dbReference>
<dbReference type="GO" id="GO:0005743">
    <property type="term" value="C:mitochondrial inner membrane"/>
    <property type="evidence" value="ECO:0007669"/>
    <property type="project" value="UniProtKB-SubCell"/>
</dbReference>
<dbReference type="GO" id="GO:0022857">
    <property type="term" value="F:transmembrane transporter activity"/>
    <property type="evidence" value="ECO:0007669"/>
    <property type="project" value="UniProtKB-ARBA"/>
</dbReference>
<dbReference type="FunFam" id="1.50.40.10:FF:000062">
    <property type="entry name" value="mitochondrial uncoupling protein 3"/>
    <property type="match status" value="1"/>
</dbReference>
<dbReference type="Gene3D" id="1.50.40.10">
    <property type="entry name" value="Mitochondrial carrier domain"/>
    <property type="match status" value="1"/>
</dbReference>
<dbReference type="InterPro" id="IPR002067">
    <property type="entry name" value="Mit_carrier"/>
</dbReference>
<dbReference type="InterPro" id="IPR050391">
    <property type="entry name" value="Mito_Metabolite_Transporter"/>
</dbReference>
<dbReference type="InterPro" id="IPR018108">
    <property type="entry name" value="Mitochondrial_sb/sol_carrier"/>
</dbReference>
<dbReference type="InterPro" id="IPR023395">
    <property type="entry name" value="Mt_carrier_dom_sf"/>
</dbReference>
<dbReference type="PANTHER" id="PTHR45618">
    <property type="entry name" value="MITOCHONDRIAL DICARBOXYLATE CARRIER-RELATED"/>
    <property type="match status" value="1"/>
</dbReference>
<dbReference type="Pfam" id="PF00153">
    <property type="entry name" value="Mito_carr"/>
    <property type="match status" value="3"/>
</dbReference>
<dbReference type="PRINTS" id="PR00784">
    <property type="entry name" value="MTUNCOUPLING"/>
</dbReference>
<dbReference type="SUPFAM" id="SSF103506">
    <property type="entry name" value="Mitochondrial carrier"/>
    <property type="match status" value="1"/>
</dbReference>
<dbReference type="PROSITE" id="PS50920">
    <property type="entry name" value="SOLCAR"/>
    <property type="match status" value="3"/>
</dbReference>
<organism>
    <name type="scientific">Arabidopsis thaliana</name>
    <name type="common">Mouse-ear cress</name>
    <dbReference type="NCBI Taxonomy" id="3702"/>
    <lineage>
        <taxon>Eukaryota</taxon>
        <taxon>Viridiplantae</taxon>
        <taxon>Streptophyta</taxon>
        <taxon>Embryophyta</taxon>
        <taxon>Tracheophyta</taxon>
        <taxon>Spermatophyta</taxon>
        <taxon>Magnoliopsida</taxon>
        <taxon>eudicotyledons</taxon>
        <taxon>Gunneridae</taxon>
        <taxon>Pentapetalae</taxon>
        <taxon>rosids</taxon>
        <taxon>malvids</taxon>
        <taxon>Brassicales</taxon>
        <taxon>Brassicaceae</taxon>
        <taxon>Camelineae</taxon>
        <taxon>Arabidopsis</taxon>
    </lineage>
</organism>
<evidence type="ECO:0000250" key="1"/>
<evidence type="ECO:0000255" key="2"/>
<evidence type="ECO:0000269" key="3">
    <source>
    </source>
</evidence>
<evidence type="ECO:0000305" key="4"/>